<protein>
    <recommendedName>
        <fullName evidence="1">Beta-ketoacyl-[acyl-carrier-protein] synthase III</fullName>
        <shortName evidence="1">Beta-ketoacyl-ACP synthase III</shortName>
        <shortName evidence="1">KAS III</shortName>
        <ecNumber evidence="1">2.3.1.180</ecNumber>
    </recommendedName>
    <alternativeName>
        <fullName evidence="1">3-oxoacyl-[acyl-carrier-protein] synthase 3</fullName>
    </alternativeName>
    <alternativeName>
        <fullName evidence="1">3-oxoacyl-[acyl-carrier-protein] synthase III</fullName>
    </alternativeName>
</protein>
<organism>
    <name type="scientific">Rhodospirillum rubrum (strain ATCC 11170 / ATH 1.1.1 / DSM 467 / LMG 4362 / NCIMB 8255 / S1)</name>
    <dbReference type="NCBI Taxonomy" id="269796"/>
    <lineage>
        <taxon>Bacteria</taxon>
        <taxon>Pseudomonadati</taxon>
        <taxon>Pseudomonadota</taxon>
        <taxon>Alphaproteobacteria</taxon>
        <taxon>Rhodospirillales</taxon>
        <taxon>Rhodospirillaceae</taxon>
        <taxon>Rhodospirillum</taxon>
    </lineage>
</organism>
<evidence type="ECO:0000255" key="1">
    <source>
        <dbReference type="HAMAP-Rule" id="MF_01815"/>
    </source>
</evidence>
<comment type="function">
    <text evidence="1">Catalyzes the condensation reaction of fatty acid synthesis by the addition to an acyl acceptor of two carbons from malonyl-ACP. Catalyzes the first condensation reaction which initiates fatty acid synthesis and may therefore play a role in governing the total rate of fatty acid production. Possesses both acetoacetyl-ACP synthase and acetyl transacylase activities. Its substrate specificity determines the biosynthesis of branched-chain and/or straight-chain of fatty acids.</text>
</comment>
<comment type="catalytic activity">
    <reaction evidence="1">
        <text>malonyl-[ACP] + acetyl-CoA + H(+) = 3-oxobutanoyl-[ACP] + CO2 + CoA</text>
        <dbReference type="Rhea" id="RHEA:12080"/>
        <dbReference type="Rhea" id="RHEA-COMP:9623"/>
        <dbReference type="Rhea" id="RHEA-COMP:9625"/>
        <dbReference type="ChEBI" id="CHEBI:15378"/>
        <dbReference type="ChEBI" id="CHEBI:16526"/>
        <dbReference type="ChEBI" id="CHEBI:57287"/>
        <dbReference type="ChEBI" id="CHEBI:57288"/>
        <dbReference type="ChEBI" id="CHEBI:78449"/>
        <dbReference type="ChEBI" id="CHEBI:78450"/>
        <dbReference type="EC" id="2.3.1.180"/>
    </reaction>
</comment>
<comment type="pathway">
    <text evidence="1">Lipid metabolism; fatty acid biosynthesis.</text>
</comment>
<comment type="subunit">
    <text evidence="1">Homodimer.</text>
</comment>
<comment type="subcellular location">
    <subcellularLocation>
        <location evidence="1">Cytoplasm</location>
    </subcellularLocation>
</comment>
<comment type="domain">
    <text evidence="1">The last Arg residue of the ACP-binding site is essential for the weak association between ACP/AcpP and FabH.</text>
</comment>
<comment type="similarity">
    <text evidence="1">Belongs to the thiolase-like superfamily. FabH family.</text>
</comment>
<gene>
    <name evidence="1" type="primary">fabH</name>
    <name type="ordered locus">Rru_A1667</name>
</gene>
<proteinExistence type="inferred from homology"/>
<reference key="1">
    <citation type="journal article" date="2011" name="Stand. Genomic Sci.">
        <title>Complete genome sequence of Rhodospirillum rubrum type strain (S1).</title>
        <authorList>
            <person name="Munk A.C."/>
            <person name="Copeland A."/>
            <person name="Lucas S."/>
            <person name="Lapidus A."/>
            <person name="Del Rio T.G."/>
            <person name="Barry K."/>
            <person name="Detter J.C."/>
            <person name="Hammon N."/>
            <person name="Israni S."/>
            <person name="Pitluck S."/>
            <person name="Brettin T."/>
            <person name="Bruce D."/>
            <person name="Han C."/>
            <person name="Tapia R."/>
            <person name="Gilna P."/>
            <person name="Schmutz J."/>
            <person name="Larimer F."/>
            <person name="Land M."/>
            <person name="Kyrpides N.C."/>
            <person name="Mavromatis K."/>
            <person name="Richardson P."/>
            <person name="Rohde M."/>
            <person name="Goeker M."/>
            <person name="Klenk H.P."/>
            <person name="Zhang Y."/>
            <person name="Roberts G.P."/>
            <person name="Reslewic S."/>
            <person name="Schwartz D.C."/>
        </authorList>
    </citation>
    <scope>NUCLEOTIDE SEQUENCE [LARGE SCALE GENOMIC DNA]</scope>
    <source>
        <strain>ATCC 11170 / ATH 1.1.1 / DSM 467 / LMG 4362 / NCIMB 8255 / S1</strain>
    </source>
</reference>
<keyword id="KW-0012">Acyltransferase</keyword>
<keyword id="KW-0963">Cytoplasm</keyword>
<keyword id="KW-0275">Fatty acid biosynthesis</keyword>
<keyword id="KW-0276">Fatty acid metabolism</keyword>
<keyword id="KW-0444">Lipid biosynthesis</keyword>
<keyword id="KW-0443">Lipid metabolism</keyword>
<keyword id="KW-0511">Multifunctional enzyme</keyword>
<keyword id="KW-1185">Reference proteome</keyword>
<keyword id="KW-0808">Transferase</keyword>
<dbReference type="EC" id="2.3.1.180" evidence="1"/>
<dbReference type="EMBL" id="CP000230">
    <property type="protein sequence ID" value="ABC22467.1"/>
    <property type="molecule type" value="Genomic_DNA"/>
</dbReference>
<dbReference type="RefSeq" id="WP_011389357.1">
    <property type="nucleotide sequence ID" value="NC_007643.1"/>
</dbReference>
<dbReference type="RefSeq" id="YP_426754.1">
    <property type="nucleotide sequence ID" value="NC_007643.1"/>
</dbReference>
<dbReference type="SMR" id="Q2RTS8"/>
<dbReference type="STRING" id="269796.Rru_A1667"/>
<dbReference type="EnsemblBacteria" id="ABC22467">
    <property type="protein sequence ID" value="ABC22467"/>
    <property type="gene ID" value="Rru_A1667"/>
</dbReference>
<dbReference type="KEGG" id="rru:Rru_A1667"/>
<dbReference type="PATRIC" id="fig|269796.9.peg.1745"/>
<dbReference type="eggNOG" id="COG0332">
    <property type="taxonomic scope" value="Bacteria"/>
</dbReference>
<dbReference type="HOGENOM" id="CLU_039592_4_1_5"/>
<dbReference type="PhylomeDB" id="Q2RTS8"/>
<dbReference type="UniPathway" id="UPA00094"/>
<dbReference type="Proteomes" id="UP000001929">
    <property type="component" value="Chromosome"/>
</dbReference>
<dbReference type="GO" id="GO:0005737">
    <property type="term" value="C:cytoplasm"/>
    <property type="evidence" value="ECO:0007669"/>
    <property type="project" value="UniProtKB-SubCell"/>
</dbReference>
<dbReference type="GO" id="GO:0004315">
    <property type="term" value="F:3-oxoacyl-[acyl-carrier-protein] synthase activity"/>
    <property type="evidence" value="ECO:0007669"/>
    <property type="project" value="InterPro"/>
</dbReference>
<dbReference type="GO" id="GO:0033818">
    <property type="term" value="F:beta-ketoacyl-acyl-carrier-protein synthase III activity"/>
    <property type="evidence" value="ECO:0007669"/>
    <property type="project" value="UniProtKB-UniRule"/>
</dbReference>
<dbReference type="GO" id="GO:0006633">
    <property type="term" value="P:fatty acid biosynthetic process"/>
    <property type="evidence" value="ECO:0007669"/>
    <property type="project" value="UniProtKB-UniRule"/>
</dbReference>
<dbReference type="CDD" id="cd00830">
    <property type="entry name" value="KAS_III"/>
    <property type="match status" value="1"/>
</dbReference>
<dbReference type="FunFam" id="3.40.47.10:FF:000004">
    <property type="entry name" value="3-oxoacyl-[acyl-carrier-protein] synthase 3"/>
    <property type="match status" value="1"/>
</dbReference>
<dbReference type="Gene3D" id="3.40.47.10">
    <property type="match status" value="1"/>
</dbReference>
<dbReference type="HAMAP" id="MF_01815">
    <property type="entry name" value="FabH"/>
    <property type="match status" value="1"/>
</dbReference>
<dbReference type="InterPro" id="IPR013747">
    <property type="entry name" value="ACP_syn_III_C"/>
</dbReference>
<dbReference type="InterPro" id="IPR013751">
    <property type="entry name" value="ACP_syn_III_N"/>
</dbReference>
<dbReference type="InterPro" id="IPR004655">
    <property type="entry name" value="FabH"/>
</dbReference>
<dbReference type="InterPro" id="IPR016039">
    <property type="entry name" value="Thiolase-like"/>
</dbReference>
<dbReference type="NCBIfam" id="TIGR00747">
    <property type="entry name" value="fabH"/>
    <property type="match status" value="1"/>
</dbReference>
<dbReference type="NCBIfam" id="NF006829">
    <property type="entry name" value="PRK09352.1"/>
    <property type="match status" value="1"/>
</dbReference>
<dbReference type="PANTHER" id="PTHR43091">
    <property type="entry name" value="3-OXOACYL-[ACYL-CARRIER-PROTEIN] SYNTHASE"/>
    <property type="match status" value="1"/>
</dbReference>
<dbReference type="PANTHER" id="PTHR43091:SF1">
    <property type="entry name" value="BETA-KETOACYL-[ACYL-CARRIER-PROTEIN] SYNTHASE III, CHLOROPLASTIC"/>
    <property type="match status" value="1"/>
</dbReference>
<dbReference type="Pfam" id="PF08545">
    <property type="entry name" value="ACP_syn_III"/>
    <property type="match status" value="1"/>
</dbReference>
<dbReference type="Pfam" id="PF08541">
    <property type="entry name" value="ACP_syn_III_C"/>
    <property type="match status" value="1"/>
</dbReference>
<dbReference type="SUPFAM" id="SSF53901">
    <property type="entry name" value="Thiolase-like"/>
    <property type="match status" value="1"/>
</dbReference>
<accession>Q2RTS8</accession>
<name>FABH_RHORT</name>
<feature type="chain" id="PRO_1000187892" description="Beta-ketoacyl-[acyl-carrier-protein] synthase III">
    <location>
        <begin position="1"/>
        <end position="324"/>
    </location>
</feature>
<feature type="region of interest" description="ACP-binding" evidence="1">
    <location>
        <begin position="252"/>
        <end position="256"/>
    </location>
</feature>
<feature type="active site" evidence="1">
    <location>
        <position position="114"/>
    </location>
</feature>
<feature type="active site" evidence="1">
    <location>
        <position position="251"/>
    </location>
</feature>
<feature type="active site" evidence="1">
    <location>
        <position position="281"/>
    </location>
</feature>
<sequence length="324" mass="33882">MWRSVIAGCGSYLPANKVTNANLAERVETTDAWIRERTGILVRHFAAEGEKTSDLAMAAARAALADAGVDAAEVDLIVLATATPDQTFPATATRVQAGLGCRPGAPAFDIQAVCSGFLYALSVADALIKAGQARTALVIGAETFSRILDFTDRTTCVLFGDGAGAVVLRATPSTGDGGERGILSTHLHADGRHHDLLYVDGGPSSTGTVGHLRMQGREVFRHAVTNLYEVVLEALAANGLQADAIDWVVPHQANQRILDGTAKKLGIDPAKVISTIALHANTSAASVPLALCEARRDGRIQPGQLILLEAMGGGFTWGSALVRL</sequence>